<reference key="1">
    <citation type="submission" date="2007-06" db="EMBL/GenBank/DDBJ databases">
        <title>Complete sequence of chromosome of Staphylococcus aureus subsp. aureus JH1.</title>
        <authorList>
            <consortium name="US DOE Joint Genome Institute"/>
            <person name="Copeland A."/>
            <person name="Lucas S."/>
            <person name="Lapidus A."/>
            <person name="Barry K."/>
            <person name="Detter J.C."/>
            <person name="Glavina del Rio T."/>
            <person name="Hammon N."/>
            <person name="Israni S."/>
            <person name="Dalin E."/>
            <person name="Tice H."/>
            <person name="Pitluck S."/>
            <person name="Chain P."/>
            <person name="Malfatti S."/>
            <person name="Shin M."/>
            <person name="Vergez L."/>
            <person name="Schmutz J."/>
            <person name="Larimer F."/>
            <person name="Land M."/>
            <person name="Hauser L."/>
            <person name="Kyrpides N."/>
            <person name="Ivanova N."/>
            <person name="Tomasz A."/>
            <person name="Richardson P."/>
        </authorList>
    </citation>
    <scope>NUCLEOTIDE SEQUENCE [LARGE SCALE GENOMIC DNA]</scope>
    <source>
        <strain>JH1</strain>
    </source>
</reference>
<keyword id="KW-1003">Cell membrane</keyword>
<keyword id="KW-0413">Isomerase</keyword>
<keyword id="KW-0449">Lipoprotein</keyword>
<keyword id="KW-0472">Membrane</keyword>
<keyword id="KW-0564">Palmitate</keyword>
<keyword id="KW-0697">Rotamase</keyword>
<keyword id="KW-0732">Signal</keyword>
<evidence type="ECO:0000255" key="1">
    <source>
        <dbReference type="HAMAP-Rule" id="MF_01145"/>
    </source>
</evidence>
<evidence type="ECO:0000256" key="2">
    <source>
        <dbReference type="SAM" id="MobiDB-lite"/>
    </source>
</evidence>
<sequence>MKMINKLIVPVTASALLLGACGASATDSKENTLISSKAGDVTVADTMKKIGKDQIANASFTEMLNKILADKYKNKVNDKKIDEQIEKMQKQYGGKDKFEKALQQQGLTADKYKENLRTAAYHKELLSDKIKISDSEIKEDSKKASHILIKVKSKKSDKEGLDDKEAKQKAEEIQKEVSKDPSKFGEIAKKESMDTGSAKKDGELGYVLKGQTDKDFEKALFKLKDGEVSEVVKSSFGYHIIKADKPTDFNSEKQSLKEKLVDQKVQKNPKLLTDAYKDLLKEYDVDFKDRDIKSVVEDKILNPEKLKQGGAQGGQSGMSQ</sequence>
<feature type="signal peptide" evidence="1">
    <location>
        <begin position="1"/>
        <end position="20"/>
    </location>
</feature>
<feature type="chain" id="PRO_1000085055" description="Foldase protein PrsA">
    <location>
        <begin position="21"/>
        <end position="320"/>
    </location>
</feature>
<feature type="domain" description="PpiC" evidence="1">
    <location>
        <begin position="139"/>
        <end position="245"/>
    </location>
</feature>
<feature type="region of interest" description="Disordered" evidence="2">
    <location>
        <begin position="159"/>
        <end position="198"/>
    </location>
</feature>
<feature type="lipid moiety-binding region" description="N-palmitoyl cysteine" evidence="1">
    <location>
        <position position="21"/>
    </location>
</feature>
<feature type="lipid moiety-binding region" description="S-diacylglycerol cysteine" evidence="1">
    <location>
        <position position="21"/>
    </location>
</feature>
<dbReference type="EC" id="5.2.1.8" evidence="1"/>
<dbReference type="EMBL" id="CP000736">
    <property type="protein sequence ID" value="ABR52762.1"/>
    <property type="molecule type" value="Genomic_DNA"/>
</dbReference>
<dbReference type="BMRB" id="A6U2U4"/>
<dbReference type="SMR" id="A6U2U4"/>
<dbReference type="KEGG" id="sah:SaurJH1_1928"/>
<dbReference type="HOGENOM" id="CLU_034646_6_2_9"/>
<dbReference type="GO" id="GO:0005886">
    <property type="term" value="C:plasma membrane"/>
    <property type="evidence" value="ECO:0007669"/>
    <property type="project" value="UniProtKB-SubCell"/>
</dbReference>
<dbReference type="GO" id="GO:0003755">
    <property type="term" value="F:peptidyl-prolyl cis-trans isomerase activity"/>
    <property type="evidence" value="ECO:0007669"/>
    <property type="project" value="UniProtKB-UniRule"/>
</dbReference>
<dbReference type="GO" id="GO:0006457">
    <property type="term" value="P:protein folding"/>
    <property type="evidence" value="ECO:0007669"/>
    <property type="project" value="UniProtKB-UniRule"/>
</dbReference>
<dbReference type="Gene3D" id="3.10.50.40">
    <property type="match status" value="1"/>
</dbReference>
<dbReference type="Gene3D" id="1.10.4030.10">
    <property type="entry name" value="Porin chaperone SurA, peptide-binding domain"/>
    <property type="match status" value="1"/>
</dbReference>
<dbReference type="HAMAP" id="MF_01145">
    <property type="entry name" value="Foldase_PrsA"/>
    <property type="match status" value="1"/>
</dbReference>
<dbReference type="InterPro" id="IPR023059">
    <property type="entry name" value="Foldase_PrsA"/>
</dbReference>
<dbReference type="InterPro" id="IPR046357">
    <property type="entry name" value="PPIase_dom_sf"/>
</dbReference>
<dbReference type="InterPro" id="IPR000297">
    <property type="entry name" value="PPIase_PpiC"/>
</dbReference>
<dbReference type="InterPro" id="IPR050245">
    <property type="entry name" value="PrsA_foldase"/>
</dbReference>
<dbReference type="InterPro" id="IPR027304">
    <property type="entry name" value="Trigger_fact/SurA_dom_sf"/>
</dbReference>
<dbReference type="PANTHER" id="PTHR47245:SF1">
    <property type="entry name" value="FOLDASE PROTEIN PRSA"/>
    <property type="match status" value="1"/>
</dbReference>
<dbReference type="PANTHER" id="PTHR47245">
    <property type="entry name" value="PEPTIDYLPROLYL ISOMERASE"/>
    <property type="match status" value="1"/>
</dbReference>
<dbReference type="Pfam" id="PF00639">
    <property type="entry name" value="Rotamase"/>
    <property type="match status" value="1"/>
</dbReference>
<dbReference type="SUPFAM" id="SSF54534">
    <property type="entry name" value="FKBP-like"/>
    <property type="match status" value="1"/>
</dbReference>
<dbReference type="SUPFAM" id="SSF109998">
    <property type="entry name" value="Triger factor/SurA peptide-binding domain-like"/>
    <property type="match status" value="1"/>
</dbReference>
<dbReference type="PROSITE" id="PS50198">
    <property type="entry name" value="PPIC_PPIASE_2"/>
    <property type="match status" value="1"/>
</dbReference>
<dbReference type="PROSITE" id="PS51257">
    <property type="entry name" value="PROKAR_LIPOPROTEIN"/>
    <property type="match status" value="1"/>
</dbReference>
<gene>
    <name evidence="1" type="primary">prsA</name>
    <name type="ordered locus">SaurJH1_1928</name>
</gene>
<comment type="function">
    <text evidence="1">Plays a major role in protein secretion by helping the post-translocational extracellular folding of several secreted proteins.</text>
</comment>
<comment type="catalytic activity">
    <reaction evidence="1">
        <text>[protein]-peptidylproline (omega=180) = [protein]-peptidylproline (omega=0)</text>
        <dbReference type="Rhea" id="RHEA:16237"/>
        <dbReference type="Rhea" id="RHEA-COMP:10747"/>
        <dbReference type="Rhea" id="RHEA-COMP:10748"/>
        <dbReference type="ChEBI" id="CHEBI:83833"/>
        <dbReference type="ChEBI" id="CHEBI:83834"/>
        <dbReference type="EC" id="5.2.1.8"/>
    </reaction>
</comment>
<comment type="subcellular location">
    <subcellularLocation>
        <location evidence="1">Cell membrane</location>
        <topology evidence="1">Lipid-anchor</topology>
    </subcellularLocation>
</comment>
<comment type="similarity">
    <text evidence="1">Belongs to the PrsA family.</text>
</comment>
<protein>
    <recommendedName>
        <fullName evidence="1">Foldase protein PrsA</fullName>
        <ecNumber evidence="1">5.2.1.8</ecNumber>
    </recommendedName>
</protein>
<organism>
    <name type="scientific">Staphylococcus aureus (strain JH1)</name>
    <dbReference type="NCBI Taxonomy" id="359787"/>
    <lineage>
        <taxon>Bacteria</taxon>
        <taxon>Bacillati</taxon>
        <taxon>Bacillota</taxon>
        <taxon>Bacilli</taxon>
        <taxon>Bacillales</taxon>
        <taxon>Staphylococcaceae</taxon>
        <taxon>Staphylococcus</taxon>
    </lineage>
</organism>
<name>PRSA_STAA2</name>
<accession>A6U2U4</accession>
<proteinExistence type="inferred from homology"/>